<reference key="1">
    <citation type="submission" date="2006-04" db="EMBL/GenBank/DDBJ databases">
        <title>Complete sequence of chromosome of Deinococcus geothermalis DSM 11300.</title>
        <authorList>
            <person name="Copeland A."/>
            <person name="Lucas S."/>
            <person name="Lapidus A."/>
            <person name="Barry K."/>
            <person name="Detter J.C."/>
            <person name="Glavina del Rio T."/>
            <person name="Hammon N."/>
            <person name="Israni S."/>
            <person name="Dalin E."/>
            <person name="Tice H."/>
            <person name="Pitluck S."/>
            <person name="Brettin T."/>
            <person name="Bruce D."/>
            <person name="Han C."/>
            <person name="Tapia R."/>
            <person name="Saunders E."/>
            <person name="Gilna P."/>
            <person name="Schmutz J."/>
            <person name="Larimer F."/>
            <person name="Land M."/>
            <person name="Hauser L."/>
            <person name="Kyrpides N."/>
            <person name="Kim E."/>
            <person name="Daly M.J."/>
            <person name="Fredrickson J.K."/>
            <person name="Makarova K.S."/>
            <person name="Gaidamakova E.K."/>
            <person name="Zhai M."/>
            <person name="Richardson P."/>
        </authorList>
    </citation>
    <scope>NUCLEOTIDE SEQUENCE [LARGE SCALE GENOMIC DNA]</scope>
    <source>
        <strain>DSM 11300 / CIP 105573 / AG-3a</strain>
    </source>
</reference>
<comment type="function">
    <text evidence="1">Pyrophosphatase that catalyzes the hydrolysis of nucleoside triphosphates to their monophosphate derivatives, with a high preference for the non-canonical purine nucleotides XTP (xanthosine triphosphate), dITP (deoxyinosine triphosphate) and ITP. Seems to function as a house-cleaning enzyme that removes non-canonical purine nucleotides from the nucleotide pool, thus preventing their incorporation into DNA/RNA and avoiding chromosomal lesions.</text>
</comment>
<comment type="catalytic activity">
    <reaction evidence="1">
        <text>XTP + H2O = XMP + diphosphate + H(+)</text>
        <dbReference type="Rhea" id="RHEA:28610"/>
        <dbReference type="ChEBI" id="CHEBI:15377"/>
        <dbReference type="ChEBI" id="CHEBI:15378"/>
        <dbReference type="ChEBI" id="CHEBI:33019"/>
        <dbReference type="ChEBI" id="CHEBI:57464"/>
        <dbReference type="ChEBI" id="CHEBI:61314"/>
        <dbReference type="EC" id="3.6.1.66"/>
    </reaction>
</comment>
<comment type="catalytic activity">
    <reaction evidence="1">
        <text>dITP + H2O = dIMP + diphosphate + H(+)</text>
        <dbReference type="Rhea" id="RHEA:28342"/>
        <dbReference type="ChEBI" id="CHEBI:15377"/>
        <dbReference type="ChEBI" id="CHEBI:15378"/>
        <dbReference type="ChEBI" id="CHEBI:33019"/>
        <dbReference type="ChEBI" id="CHEBI:61194"/>
        <dbReference type="ChEBI" id="CHEBI:61382"/>
        <dbReference type="EC" id="3.6.1.66"/>
    </reaction>
</comment>
<comment type="catalytic activity">
    <reaction evidence="1">
        <text>ITP + H2O = IMP + diphosphate + H(+)</text>
        <dbReference type="Rhea" id="RHEA:29399"/>
        <dbReference type="ChEBI" id="CHEBI:15377"/>
        <dbReference type="ChEBI" id="CHEBI:15378"/>
        <dbReference type="ChEBI" id="CHEBI:33019"/>
        <dbReference type="ChEBI" id="CHEBI:58053"/>
        <dbReference type="ChEBI" id="CHEBI:61402"/>
        <dbReference type="EC" id="3.6.1.66"/>
    </reaction>
</comment>
<comment type="cofactor">
    <cofactor evidence="1">
        <name>Mg(2+)</name>
        <dbReference type="ChEBI" id="CHEBI:18420"/>
    </cofactor>
    <text evidence="1">Binds 1 Mg(2+) ion per subunit.</text>
</comment>
<comment type="subunit">
    <text evidence="1">Homodimer.</text>
</comment>
<comment type="similarity">
    <text evidence="1">Belongs to the HAM1 NTPase family.</text>
</comment>
<keyword id="KW-0378">Hydrolase</keyword>
<keyword id="KW-0460">Magnesium</keyword>
<keyword id="KW-0479">Metal-binding</keyword>
<keyword id="KW-0546">Nucleotide metabolism</keyword>
<keyword id="KW-0547">Nucleotide-binding</keyword>
<gene>
    <name type="ordered locus">Dgeo_2209</name>
</gene>
<proteinExistence type="inferred from homology"/>
<accession>Q1IW81</accession>
<evidence type="ECO:0000255" key="1">
    <source>
        <dbReference type="HAMAP-Rule" id="MF_01405"/>
    </source>
</evidence>
<feature type="chain" id="PRO_1000068420" description="dITP/XTP pyrophosphatase">
    <location>
        <begin position="1"/>
        <end position="199"/>
    </location>
</feature>
<feature type="active site" description="Proton acceptor" evidence="1">
    <location>
        <position position="66"/>
    </location>
</feature>
<feature type="binding site" evidence="1">
    <location>
        <begin position="7"/>
        <end position="12"/>
    </location>
    <ligand>
        <name>substrate</name>
    </ligand>
</feature>
<feature type="binding site" evidence="1">
    <location>
        <position position="37"/>
    </location>
    <ligand>
        <name>Mg(2+)</name>
        <dbReference type="ChEBI" id="CHEBI:18420"/>
    </ligand>
</feature>
<feature type="binding site" evidence="1">
    <location>
        <position position="66"/>
    </location>
    <ligand>
        <name>Mg(2+)</name>
        <dbReference type="ChEBI" id="CHEBI:18420"/>
    </ligand>
</feature>
<feature type="binding site" evidence="1">
    <location>
        <position position="67"/>
    </location>
    <ligand>
        <name>substrate</name>
    </ligand>
</feature>
<feature type="binding site" evidence="1">
    <location>
        <begin position="146"/>
        <end position="149"/>
    </location>
    <ligand>
        <name>substrate</name>
    </ligand>
</feature>
<feature type="binding site" evidence="1">
    <location>
        <position position="169"/>
    </location>
    <ligand>
        <name>substrate</name>
    </ligand>
</feature>
<feature type="binding site" evidence="1">
    <location>
        <begin position="174"/>
        <end position="175"/>
    </location>
    <ligand>
        <name>substrate</name>
    </ligand>
</feature>
<dbReference type="EC" id="3.6.1.66" evidence="1"/>
<dbReference type="EMBL" id="CP000359">
    <property type="protein sequence ID" value="ABF46503.1"/>
    <property type="molecule type" value="Genomic_DNA"/>
</dbReference>
<dbReference type="RefSeq" id="WP_011531324.1">
    <property type="nucleotide sequence ID" value="NC_008025.1"/>
</dbReference>
<dbReference type="SMR" id="Q1IW81"/>
<dbReference type="STRING" id="319795.Dgeo_2209"/>
<dbReference type="KEGG" id="dge:Dgeo_2209"/>
<dbReference type="eggNOG" id="COG0127">
    <property type="taxonomic scope" value="Bacteria"/>
</dbReference>
<dbReference type="HOGENOM" id="CLU_082080_0_0_0"/>
<dbReference type="Proteomes" id="UP000002431">
    <property type="component" value="Chromosome"/>
</dbReference>
<dbReference type="GO" id="GO:0005829">
    <property type="term" value="C:cytosol"/>
    <property type="evidence" value="ECO:0007669"/>
    <property type="project" value="TreeGrafter"/>
</dbReference>
<dbReference type="GO" id="GO:0035870">
    <property type="term" value="F:dITP diphosphatase activity"/>
    <property type="evidence" value="ECO:0007669"/>
    <property type="project" value="RHEA"/>
</dbReference>
<dbReference type="GO" id="GO:0036220">
    <property type="term" value="F:ITP diphosphatase activity"/>
    <property type="evidence" value="ECO:0007669"/>
    <property type="project" value="UniProtKB-EC"/>
</dbReference>
<dbReference type="GO" id="GO:0046872">
    <property type="term" value="F:metal ion binding"/>
    <property type="evidence" value="ECO:0007669"/>
    <property type="project" value="UniProtKB-KW"/>
</dbReference>
<dbReference type="GO" id="GO:0000166">
    <property type="term" value="F:nucleotide binding"/>
    <property type="evidence" value="ECO:0007669"/>
    <property type="project" value="UniProtKB-KW"/>
</dbReference>
<dbReference type="GO" id="GO:0017111">
    <property type="term" value="F:ribonucleoside triphosphate phosphatase activity"/>
    <property type="evidence" value="ECO:0007669"/>
    <property type="project" value="InterPro"/>
</dbReference>
<dbReference type="GO" id="GO:0036222">
    <property type="term" value="F:XTP diphosphatase activity"/>
    <property type="evidence" value="ECO:0007669"/>
    <property type="project" value="RHEA"/>
</dbReference>
<dbReference type="GO" id="GO:0009117">
    <property type="term" value="P:nucleotide metabolic process"/>
    <property type="evidence" value="ECO:0007669"/>
    <property type="project" value="UniProtKB-KW"/>
</dbReference>
<dbReference type="GO" id="GO:0009146">
    <property type="term" value="P:purine nucleoside triphosphate catabolic process"/>
    <property type="evidence" value="ECO:0007669"/>
    <property type="project" value="UniProtKB-UniRule"/>
</dbReference>
<dbReference type="CDD" id="cd00515">
    <property type="entry name" value="HAM1"/>
    <property type="match status" value="1"/>
</dbReference>
<dbReference type="FunFam" id="3.90.950.10:FF:000001">
    <property type="entry name" value="dITP/XTP pyrophosphatase"/>
    <property type="match status" value="1"/>
</dbReference>
<dbReference type="Gene3D" id="3.90.950.10">
    <property type="match status" value="1"/>
</dbReference>
<dbReference type="HAMAP" id="MF_01405">
    <property type="entry name" value="Non_canon_purine_NTPase"/>
    <property type="match status" value="1"/>
</dbReference>
<dbReference type="InterPro" id="IPR020922">
    <property type="entry name" value="dITP/XTP_pyrophosphatase"/>
</dbReference>
<dbReference type="InterPro" id="IPR029001">
    <property type="entry name" value="ITPase-like_fam"/>
</dbReference>
<dbReference type="InterPro" id="IPR002637">
    <property type="entry name" value="RdgB/HAM1"/>
</dbReference>
<dbReference type="NCBIfam" id="TIGR00042">
    <property type="entry name" value="RdgB/HAM1 family non-canonical purine NTP pyrophosphatase"/>
    <property type="match status" value="1"/>
</dbReference>
<dbReference type="PANTHER" id="PTHR11067:SF9">
    <property type="entry name" value="INOSINE TRIPHOSPHATE PYROPHOSPHATASE"/>
    <property type="match status" value="1"/>
</dbReference>
<dbReference type="PANTHER" id="PTHR11067">
    <property type="entry name" value="INOSINE TRIPHOSPHATE PYROPHOSPHATASE/HAM1 PROTEIN"/>
    <property type="match status" value="1"/>
</dbReference>
<dbReference type="Pfam" id="PF01725">
    <property type="entry name" value="Ham1p_like"/>
    <property type="match status" value="1"/>
</dbReference>
<dbReference type="SUPFAM" id="SSF52972">
    <property type="entry name" value="ITPase-like"/>
    <property type="match status" value="1"/>
</dbReference>
<organism>
    <name type="scientific">Deinococcus geothermalis (strain DSM 11300 / CIP 105573 / AG-3a)</name>
    <dbReference type="NCBI Taxonomy" id="319795"/>
    <lineage>
        <taxon>Bacteria</taxon>
        <taxon>Thermotogati</taxon>
        <taxon>Deinococcota</taxon>
        <taxon>Deinococci</taxon>
        <taxon>Deinococcales</taxon>
        <taxon>Deinococcaceae</taxon>
        <taxon>Deinococcus</taxon>
    </lineage>
</organism>
<protein>
    <recommendedName>
        <fullName evidence="1">dITP/XTP pyrophosphatase</fullName>
        <ecNumber evidence="1">3.6.1.66</ecNumber>
    </recommendedName>
    <alternativeName>
        <fullName evidence="1">Non-canonical purine NTP pyrophosphatase</fullName>
    </alternativeName>
    <alternativeName>
        <fullName evidence="1">Non-standard purine NTP pyrophosphatase</fullName>
    </alternativeName>
    <alternativeName>
        <fullName evidence="1">Nucleoside-triphosphate diphosphatase</fullName>
    </alternativeName>
    <alternativeName>
        <fullName evidence="1">Nucleoside-triphosphate pyrophosphatase</fullName>
        <shortName evidence="1">NTPase</shortName>
    </alternativeName>
</protein>
<sequence length="199" mass="21430">MRVVVATGNAGKVREIAEALSELGWQLEGLNGLTLPEETGTTYEENAALKACAAALAKGLPALADDSGLEVAALDGQPGVYSARFGNRPNDTERNLYLLEKLRGVQDRRAKFVSVVMLAYPDGHVETYRGELTGTLLEGPRGENGFGYDPLFVPDGETRTLAEMTVAEKRTISHRGRALAALLATHRNGPPPRETVRTE</sequence>
<name>IXTPA_DEIGD</name>